<name>CMBL_XENTR</name>
<gene>
    <name type="primary">cmbl</name>
    <name type="ORF">TGas069i06.1</name>
</gene>
<sequence length="246" mass="28471">MANEACPCPCDIGDKIEYGAKGQEVQIEHIKAYVSKPHSSTDKAVIVVQDIFGWQLPNTRFMADLLTAHGYITICPDFFVGQEPWKPSNDRSTFTEWLQTRQATKVEKEINVVLKYLKEQCHVKKIGVIGFCWGGVVTHHLMLKYPELKAGVSFYGIIRDVEDRYNLLNPTLFIFAEMDHVIPLEQVSLLEEKLKVHSKVDFQVKVFPKQTHGFVHRKNEDINPEDKPFIEEARKNMLEWLHKYIN</sequence>
<organism>
    <name type="scientific">Xenopus tropicalis</name>
    <name type="common">Western clawed frog</name>
    <name type="synonym">Silurana tropicalis</name>
    <dbReference type="NCBI Taxonomy" id="8364"/>
    <lineage>
        <taxon>Eukaryota</taxon>
        <taxon>Metazoa</taxon>
        <taxon>Chordata</taxon>
        <taxon>Craniata</taxon>
        <taxon>Vertebrata</taxon>
        <taxon>Euteleostomi</taxon>
        <taxon>Amphibia</taxon>
        <taxon>Batrachia</taxon>
        <taxon>Anura</taxon>
        <taxon>Pipoidea</taxon>
        <taxon>Pipidae</taxon>
        <taxon>Xenopodinae</taxon>
        <taxon>Xenopus</taxon>
        <taxon>Silurana</taxon>
    </lineage>
</organism>
<keyword id="KW-0963">Cytoplasm</keyword>
<keyword id="KW-0378">Hydrolase</keyword>
<keyword id="KW-1185">Reference proteome</keyword>
<proteinExistence type="evidence at transcript level"/>
<protein>
    <recommendedName>
        <fullName>Carboxymethylenebutenolidase homolog</fullName>
        <ecNumber>3.1.-.-</ecNumber>
    </recommendedName>
</protein>
<dbReference type="EC" id="3.1.-.-"/>
<dbReference type="EMBL" id="CR761635">
    <property type="protein sequence ID" value="CAJ83783.1"/>
    <property type="molecule type" value="mRNA"/>
</dbReference>
<dbReference type="EMBL" id="BC061630">
    <property type="protein sequence ID" value="AAH61630.1"/>
    <property type="molecule type" value="mRNA"/>
</dbReference>
<dbReference type="EMBL" id="BC082501">
    <property type="protein sequence ID" value="AAH82501.1"/>
    <property type="molecule type" value="mRNA"/>
</dbReference>
<dbReference type="RefSeq" id="NP_988901.1">
    <property type="nucleotide sequence ID" value="NM_203570.1"/>
</dbReference>
<dbReference type="SMR" id="Q6P7K0"/>
<dbReference type="FunCoup" id="Q6P7K0">
    <property type="interactions" value="524"/>
</dbReference>
<dbReference type="STRING" id="8364.ENSXETP00000036061"/>
<dbReference type="ESTHER" id="xentr-q6p7k0">
    <property type="family name" value="CMBL"/>
</dbReference>
<dbReference type="PaxDb" id="8364-ENSXETP00000054521"/>
<dbReference type="DNASU" id="394496"/>
<dbReference type="GeneID" id="394496"/>
<dbReference type="KEGG" id="xtr:394496"/>
<dbReference type="AGR" id="Xenbase:XB-GENE-5806009"/>
<dbReference type="CTD" id="134147"/>
<dbReference type="Xenbase" id="XB-GENE-5806009">
    <property type="gene designation" value="cmbl"/>
</dbReference>
<dbReference type="eggNOG" id="KOG3043">
    <property type="taxonomic scope" value="Eukaryota"/>
</dbReference>
<dbReference type="HOGENOM" id="CLU_054590_8_2_1"/>
<dbReference type="InParanoid" id="Q6P7K0"/>
<dbReference type="OMA" id="QCGAKHI"/>
<dbReference type="OrthoDB" id="17560at2759"/>
<dbReference type="PhylomeDB" id="Q6P7K0"/>
<dbReference type="TreeFam" id="TF331795"/>
<dbReference type="Reactome" id="R-XTR-211945">
    <property type="pathway name" value="Phase I - Functionalization of compounds"/>
</dbReference>
<dbReference type="Proteomes" id="UP000008143">
    <property type="component" value="Chromosome 6"/>
</dbReference>
<dbReference type="Bgee" id="ENSXETG00000025629">
    <property type="expression patterns" value="Expressed in liver and 13 other cell types or tissues"/>
</dbReference>
<dbReference type="GO" id="GO:0005829">
    <property type="term" value="C:cytosol"/>
    <property type="evidence" value="ECO:0007669"/>
    <property type="project" value="UniProtKB-SubCell"/>
</dbReference>
<dbReference type="GO" id="GO:0016787">
    <property type="term" value="F:hydrolase activity"/>
    <property type="evidence" value="ECO:0007669"/>
    <property type="project" value="UniProtKB-KW"/>
</dbReference>
<dbReference type="FunFam" id="3.40.50.1820:FF:000178">
    <property type="entry name" value="Carboxymethylenebutenolidase homolog"/>
    <property type="match status" value="1"/>
</dbReference>
<dbReference type="Gene3D" id="3.40.50.1820">
    <property type="entry name" value="alpha/beta hydrolase"/>
    <property type="match status" value="1"/>
</dbReference>
<dbReference type="InterPro" id="IPR029058">
    <property type="entry name" value="AB_hydrolase_fold"/>
</dbReference>
<dbReference type="InterPro" id="IPR042946">
    <property type="entry name" value="CMBL"/>
</dbReference>
<dbReference type="InterPro" id="IPR002925">
    <property type="entry name" value="Dienelactn_hydro"/>
</dbReference>
<dbReference type="PANTHER" id="PTHR46812">
    <property type="entry name" value="CARBOXYMETHYLENEBUTENOLIDASE HOMOLOG"/>
    <property type="match status" value="1"/>
</dbReference>
<dbReference type="PANTHER" id="PTHR46812:SF1">
    <property type="entry name" value="CARBOXYMETHYLENEBUTENOLIDASE HOMOLOG"/>
    <property type="match status" value="1"/>
</dbReference>
<dbReference type="Pfam" id="PF01738">
    <property type="entry name" value="DLH"/>
    <property type="match status" value="1"/>
</dbReference>
<dbReference type="SUPFAM" id="SSF53474">
    <property type="entry name" value="alpha/beta-Hydrolases"/>
    <property type="match status" value="1"/>
</dbReference>
<comment type="function">
    <text evidence="1">Cysteine hydrolase.</text>
</comment>
<comment type="subcellular location">
    <subcellularLocation>
        <location evidence="1">Cytoplasm</location>
        <location evidence="1">Cytosol</location>
    </subcellularLocation>
</comment>
<comment type="similarity">
    <text evidence="2">Belongs to the dienelactone hydrolase family.</text>
</comment>
<feature type="chain" id="PRO_0000308193" description="Carboxymethylenebutenolidase homolog">
    <location>
        <begin position="1"/>
        <end position="246"/>
    </location>
</feature>
<feature type="active site" evidence="1">
    <location>
        <position position="132"/>
    </location>
</feature>
<feature type="active site" evidence="1">
    <location>
        <position position="179"/>
    </location>
</feature>
<feature type="active site" evidence="1">
    <location>
        <position position="212"/>
    </location>
</feature>
<evidence type="ECO:0000250" key="1"/>
<evidence type="ECO:0000305" key="2"/>
<accession>Q6P7K0</accession>
<reference key="1">
    <citation type="submission" date="2006-10" db="EMBL/GenBank/DDBJ databases">
        <authorList>
            <consortium name="Sanger Xenopus tropicalis EST/cDNA project"/>
        </authorList>
    </citation>
    <scope>NUCLEOTIDE SEQUENCE [LARGE SCALE MRNA]</scope>
    <source>
        <tissue>Gastrula</tissue>
    </source>
</reference>
<reference key="2">
    <citation type="submission" date="2003-11" db="EMBL/GenBank/DDBJ databases">
        <authorList>
            <consortium name="NIH - Xenopus Gene Collection (XGC) project"/>
        </authorList>
    </citation>
    <scope>NUCLEOTIDE SEQUENCE [LARGE SCALE MRNA]</scope>
    <source>
        <tissue>Embryo</tissue>
    </source>
</reference>